<sequence length="152" mass="16358">MSCMGAAVNIITTDGPAGRAGFTASAVCSVTDTPPTLLVCLNRGASVWPVFNENRTLCVNTLSAGQEPLSNLFGGKTPMEHRFAAARWQTGVTGCPQLEEALVSFDCRISQVVSVGTHDILFCAIEAIHRHTTPYGLVWFDRSYHALMRPAC</sequence>
<evidence type="ECO:0000255" key="1">
    <source>
        <dbReference type="HAMAP-Rule" id="MF_00833"/>
    </source>
</evidence>
<proteinExistence type="inferred from homology"/>
<accession>B6I983</accession>
<keyword id="KW-0285">Flavoprotein</keyword>
<keyword id="KW-0288">FMN</keyword>
<keyword id="KW-0520">NAD</keyword>
<keyword id="KW-0560">Oxidoreductase</keyword>
<organism>
    <name type="scientific">Escherichia coli (strain SE11)</name>
    <dbReference type="NCBI Taxonomy" id="409438"/>
    <lineage>
        <taxon>Bacteria</taxon>
        <taxon>Pseudomonadati</taxon>
        <taxon>Pseudomonadota</taxon>
        <taxon>Gammaproteobacteria</taxon>
        <taxon>Enterobacterales</taxon>
        <taxon>Enterobacteriaceae</taxon>
        <taxon>Escherichia</taxon>
    </lineage>
</organism>
<gene>
    <name evidence="1" type="primary">rutF</name>
    <name type="ordered locus">ECSE_1069</name>
</gene>
<protein>
    <recommendedName>
        <fullName evidence="1">FMN reductase (NADH) RutF</fullName>
        <ecNumber evidence="1">1.5.1.42</ecNumber>
    </recommendedName>
    <alternativeName>
        <fullName evidence="1">FMN reductase</fullName>
    </alternativeName>
    <alternativeName>
        <fullName evidence="1">NADH-flavin reductase RutF</fullName>
    </alternativeName>
    <alternativeName>
        <fullName evidence="1">NADH:flavin oxidoreductase</fullName>
    </alternativeName>
</protein>
<dbReference type="EC" id="1.5.1.42" evidence="1"/>
<dbReference type="EMBL" id="AP009240">
    <property type="protein sequence ID" value="BAG76593.1"/>
    <property type="molecule type" value="Genomic_DNA"/>
</dbReference>
<dbReference type="SMR" id="B6I983"/>
<dbReference type="KEGG" id="ecy:ECSE_1069"/>
<dbReference type="HOGENOM" id="CLU_059021_2_2_6"/>
<dbReference type="Proteomes" id="UP000008199">
    <property type="component" value="Chromosome"/>
</dbReference>
<dbReference type="GO" id="GO:0010181">
    <property type="term" value="F:FMN binding"/>
    <property type="evidence" value="ECO:0007669"/>
    <property type="project" value="InterPro"/>
</dbReference>
<dbReference type="GO" id="GO:0052874">
    <property type="term" value="F:FMN reductase (NADH) activity"/>
    <property type="evidence" value="ECO:0007669"/>
    <property type="project" value="UniProtKB-EC"/>
</dbReference>
<dbReference type="GO" id="GO:0008752">
    <property type="term" value="F:FMN reductase [NAD(P)H] activity"/>
    <property type="evidence" value="ECO:0007669"/>
    <property type="project" value="InterPro"/>
</dbReference>
<dbReference type="GO" id="GO:0042602">
    <property type="term" value="F:riboflavin reductase (NADPH) activity"/>
    <property type="evidence" value="ECO:0007669"/>
    <property type="project" value="UniProtKB-UniRule"/>
</dbReference>
<dbReference type="GO" id="GO:0019740">
    <property type="term" value="P:nitrogen utilization"/>
    <property type="evidence" value="ECO:0007669"/>
    <property type="project" value="UniProtKB-UniRule"/>
</dbReference>
<dbReference type="GO" id="GO:0006212">
    <property type="term" value="P:uracil catabolic process"/>
    <property type="evidence" value="ECO:0007669"/>
    <property type="project" value="UniProtKB-UniRule"/>
</dbReference>
<dbReference type="FunFam" id="2.30.110.10:FF:000002">
    <property type="entry name" value="FMN reductase (NADH) RutF"/>
    <property type="match status" value="1"/>
</dbReference>
<dbReference type="Gene3D" id="2.30.110.10">
    <property type="entry name" value="Electron Transport, Fmn-binding Protein, Chain A"/>
    <property type="match status" value="1"/>
</dbReference>
<dbReference type="HAMAP" id="MF_00833">
    <property type="entry name" value="RutF"/>
    <property type="match status" value="1"/>
</dbReference>
<dbReference type="InterPro" id="IPR002563">
    <property type="entry name" value="Flavin_Rdtase-like_dom"/>
</dbReference>
<dbReference type="InterPro" id="IPR050268">
    <property type="entry name" value="NADH-dep_flavin_reductase"/>
</dbReference>
<dbReference type="InterPro" id="IPR019917">
    <property type="entry name" value="RutF"/>
</dbReference>
<dbReference type="InterPro" id="IPR012349">
    <property type="entry name" value="Split_barrel_FMN-bd"/>
</dbReference>
<dbReference type="NCBIfam" id="TIGR03615">
    <property type="entry name" value="RutF"/>
    <property type="match status" value="1"/>
</dbReference>
<dbReference type="PANTHER" id="PTHR30466">
    <property type="entry name" value="FLAVIN REDUCTASE"/>
    <property type="match status" value="1"/>
</dbReference>
<dbReference type="PANTHER" id="PTHR30466:SF1">
    <property type="entry name" value="FMN REDUCTASE (NADH) RUTF"/>
    <property type="match status" value="1"/>
</dbReference>
<dbReference type="Pfam" id="PF01613">
    <property type="entry name" value="Flavin_Reduct"/>
    <property type="match status" value="1"/>
</dbReference>
<dbReference type="SMART" id="SM00903">
    <property type="entry name" value="Flavin_Reduct"/>
    <property type="match status" value="1"/>
</dbReference>
<dbReference type="SUPFAM" id="SSF50475">
    <property type="entry name" value="FMN-binding split barrel"/>
    <property type="match status" value="1"/>
</dbReference>
<name>RUTF_ECOSE</name>
<reference key="1">
    <citation type="journal article" date="2008" name="DNA Res.">
        <title>Complete genome sequence and comparative analysis of the wild-type commensal Escherichia coli strain SE11 isolated from a healthy adult.</title>
        <authorList>
            <person name="Oshima K."/>
            <person name="Toh H."/>
            <person name="Ogura Y."/>
            <person name="Sasamoto H."/>
            <person name="Morita H."/>
            <person name="Park S.-H."/>
            <person name="Ooka T."/>
            <person name="Iyoda S."/>
            <person name="Taylor T.D."/>
            <person name="Hayashi T."/>
            <person name="Itoh K."/>
            <person name="Hattori M."/>
        </authorList>
    </citation>
    <scope>NUCLEOTIDE SEQUENCE [LARGE SCALE GENOMIC DNA]</scope>
    <source>
        <strain>SE11</strain>
    </source>
</reference>
<feature type="chain" id="PRO_0000403005" description="FMN reductase (NADH) RutF">
    <location>
        <begin position="1"/>
        <end position="152"/>
    </location>
</feature>
<comment type="function">
    <text evidence="1">Catalyzes the reduction of FMN to FMNH2 which is used to reduce pyrimidine by RutA via the Rut pathway.</text>
</comment>
<comment type="catalytic activity">
    <reaction evidence="1">
        <text>FMNH2 + NAD(+) = FMN + NADH + 2 H(+)</text>
        <dbReference type="Rhea" id="RHEA:21620"/>
        <dbReference type="ChEBI" id="CHEBI:15378"/>
        <dbReference type="ChEBI" id="CHEBI:57540"/>
        <dbReference type="ChEBI" id="CHEBI:57618"/>
        <dbReference type="ChEBI" id="CHEBI:57945"/>
        <dbReference type="ChEBI" id="CHEBI:58210"/>
        <dbReference type="EC" id="1.5.1.42"/>
    </reaction>
</comment>
<comment type="induction">
    <text evidence="1">Up-regulated by the nitrogen regulatory protein C (NtrC also called GlnG) and repressed by RutR.</text>
</comment>
<comment type="similarity">
    <text evidence="1">Belongs to the non-flavoprotein flavin reductase family. RutF subfamily.</text>
</comment>